<sequence length="148" mass="16890">MDNFIQELQRLFPDLEVREGVDVPALVVPADQLLALMTELKEKRGFNFLADLTAVDYPEDERIEMVYHLLSVPGMAEIRVKVNLDRQHPEVPSLTALWPAANVQEREAFDLMGVKFPGHPDLKRILCPDDFVGHPLRKDFRLQTEGGE</sequence>
<gene>
    <name evidence="1" type="primary">nuoC</name>
    <name type="ordered locus">Moth_0979</name>
</gene>
<proteinExistence type="inferred from homology"/>
<feature type="chain" id="PRO_0000358130" description="NADH-quinone oxidoreductase subunit C">
    <location>
        <begin position="1"/>
        <end position="148"/>
    </location>
</feature>
<name>NUOC_MOOTA</name>
<accession>Q2RJU5</accession>
<protein>
    <recommendedName>
        <fullName evidence="1">NADH-quinone oxidoreductase subunit C</fullName>
        <ecNumber evidence="1">7.1.1.-</ecNumber>
    </recommendedName>
    <alternativeName>
        <fullName evidence="1">NADH dehydrogenase I subunit C</fullName>
    </alternativeName>
    <alternativeName>
        <fullName evidence="1">NDH-1 subunit C</fullName>
    </alternativeName>
</protein>
<dbReference type="EC" id="7.1.1.-" evidence="1"/>
<dbReference type="EMBL" id="CP000232">
    <property type="protein sequence ID" value="ABC19294.1"/>
    <property type="molecule type" value="Genomic_DNA"/>
</dbReference>
<dbReference type="RefSeq" id="YP_429837.1">
    <property type="nucleotide sequence ID" value="NC_007644.1"/>
</dbReference>
<dbReference type="SMR" id="Q2RJU5"/>
<dbReference type="STRING" id="264732.Moth_0979"/>
<dbReference type="EnsemblBacteria" id="ABC19294">
    <property type="protein sequence ID" value="ABC19294"/>
    <property type="gene ID" value="Moth_0979"/>
</dbReference>
<dbReference type="KEGG" id="mta:Moth_0979"/>
<dbReference type="PATRIC" id="fig|264732.11.peg.1053"/>
<dbReference type="eggNOG" id="COG0852">
    <property type="taxonomic scope" value="Bacteria"/>
</dbReference>
<dbReference type="HOGENOM" id="CLU_042628_6_0_9"/>
<dbReference type="OrthoDB" id="9803286at2"/>
<dbReference type="GO" id="GO:0005886">
    <property type="term" value="C:plasma membrane"/>
    <property type="evidence" value="ECO:0007669"/>
    <property type="project" value="UniProtKB-SubCell"/>
</dbReference>
<dbReference type="GO" id="GO:0008137">
    <property type="term" value="F:NADH dehydrogenase (ubiquinone) activity"/>
    <property type="evidence" value="ECO:0007669"/>
    <property type="project" value="InterPro"/>
</dbReference>
<dbReference type="GO" id="GO:0050136">
    <property type="term" value="F:NADH:ubiquinone reductase (non-electrogenic) activity"/>
    <property type="evidence" value="ECO:0007669"/>
    <property type="project" value="UniProtKB-UniRule"/>
</dbReference>
<dbReference type="GO" id="GO:0048038">
    <property type="term" value="F:quinone binding"/>
    <property type="evidence" value="ECO:0007669"/>
    <property type="project" value="UniProtKB-KW"/>
</dbReference>
<dbReference type="Gene3D" id="3.30.460.80">
    <property type="entry name" value="NADH:ubiquinone oxidoreductase, 30kDa subunit"/>
    <property type="match status" value="1"/>
</dbReference>
<dbReference type="HAMAP" id="MF_01357">
    <property type="entry name" value="NDH1_NuoC"/>
    <property type="match status" value="1"/>
</dbReference>
<dbReference type="InterPro" id="IPR010218">
    <property type="entry name" value="NADH_DH_suC"/>
</dbReference>
<dbReference type="InterPro" id="IPR037232">
    <property type="entry name" value="NADH_quin_OxRdtase_su_C/D-like"/>
</dbReference>
<dbReference type="InterPro" id="IPR001268">
    <property type="entry name" value="NADH_UbQ_OxRdtase_30kDa_su"/>
</dbReference>
<dbReference type="InterPro" id="IPR020396">
    <property type="entry name" value="NADH_UbQ_OxRdtase_CS"/>
</dbReference>
<dbReference type="NCBIfam" id="TIGR01961">
    <property type="entry name" value="NuoC_fam"/>
    <property type="match status" value="1"/>
</dbReference>
<dbReference type="PANTHER" id="PTHR10884:SF14">
    <property type="entry name" value="NADH DEHYDROGENASE [UBIQUINONE] IRON-SULFUR PROTEIN 3, MITOCHONDRIAL"/>
    <property type="match status" value="1"/>
</dbReference>
<dbReference type="PANTHER" id="PTHR10884">
    <property type="entry name" value="NADH DEHYDROGENASE UBIQUINONE IRON-SULFUR PROTEIN 3"/>
    <property type="match status" value="1"/>
</dbReference>
<dbReference type="Pfam" id="PF00329">
    <property type="entry name" value="Complex1_30kDa"/>
    <property type="match status" value="1"/>
</dbReference>
<dbReference type="SUPFAM" id="SSF143243">
    <property type="entry name" value="Nqo5-like"/>
    <property type="match status" value="1"/>
</dbReference>
<dbReference type="PROSITE" id="PS00542">
    <property type="entry name" value="COMPLEX1_30K"/>
    <property type="match status" value="1"/>
</dbReference>
<evidence type="ECO:0000255" key="1">
    <source>
        <dbReference type="HAMAP-Rule" id="MF_01357"/>
    </source>
</evidence>
<comment type="function">
    <text evidence="1">NDH-1 shuttles electrons from NADH, via FMN and iron-sulfur (Fe-S) centers, to quinones in the respiratory chain. The immediate electron acceptor for the enzyme in this species is believed to be a menaquinone. Couples the redox reaction to proton translocation (for every two electrons transferred, four hydrogen ions are translocated across the cytoplasmic membrane), and thus conserves the redox energy in a proton gradient.</text>
</comment>
<comment type="catalytic activity">
    <reaction evidence="1">
        <text>a quinone + NADH + 5 H(+)(in) = a quinol + NAD(+) + 4 H(+)(out)</text>
        <dbReference type="Rhea" id="RHEA:57888"/>
        <dbReference type="ChEBI" id="CHEBI:15378"/>
        <dbReference type="ChEBI" id="CHEBI:24646"/>
        <dbReference type="ChEBI" id="CHEBI:57540"/>
        <dbReference type="ChEBI" id="CHEBI:57945"/>
        <dbReference type="ChEBI" id="CHEBI:132124"/>
    </reaction>
</comment>
<comment type="subunit">
    <text evidence="1">NDH-1 is composed of 14 different subunits. Subunits NuoB, C, D, E, F, and G constitute the peripheral sector of the complex.</text>
</comment>
<comment type="subcellular location">
    <subcellularLocation>
        <location evidence="1">Cell membrane</location>
        <topology evidence="1">Peripheral membrane protein</topology>
        <orientation evidence="1">Cytoplasmic side</orientation>
    </subcellularLocation>
</comment>
<comment type="similarity">
    <text evidence="1">Belongs to the complex I 30 kDa subunit family.</text>
</comment>
<organism>
    <name type="scientific">Moorella thermoacetica (strain ATCC 39073 / JCM 9320)</name>
    <dbReference type="NCBI Taxonomy" id="264732"/>
    <lineage>
        <taxon>Bacteria</taxon>
        <taxon>Bacillati</taxon>
        <taxon>Bacillota</taxon>
        <taxon>Clostridia</taxon>
        <taxon>Moorellales</taxon>
        <taxon>Moorellaceae</taxon>
        <taxon>Moorella</taxon>
    </lineage>
</organism>
<keyword id="KW-1003">Cell membrane</keyword>
<keyword id="KW-0472">Membrane</keyword>
<keyword id="KW-0520">NAD</keyword>
<keyword id="KW-0874">Quinone</keyword>
<keyword id="KW-1278">Translocase</keyword>
<keyword id="KW-0813">Transport</keyword>
<reference key="1">
    <citation type="journal article" date="2008" name="Environ. Microbiol.">
        <title>The complete genome sequence of Moorella thermoacetica (f. Clostridium thermoaceticum).</title>
        <authorList>
            <person name="Pierce E."/>
            <person name="Xie G."/>
            <person name="Barabote R.D."/>
            <person name="Saunders E."/>
            <person name="Han C.S."/>
            <person name="Detter J.C."/>
            <person name="Richardson P."/>
            <person name="Brettin T.S."/>
            <person name="Das A."/>
            <person name="Ljungdahl L.G."/>
            <person name="Ragsdale S.W."/>
        </authorList>
    </citation>
    <scope>NUCLEOTIDE SEQUENCE [LARGE SCALE GENOMIC DNA]</scope>
    <source>
        <strain>ATCC 39073 / JCM 9320</strain>
    </source>
</reference>